<organism>
    <name type="scientific">Arabidopsis thaliana</name>
    <name type="common">Mouse-ear cress</name>
    <dbReference type="NCBI Taxonomy" id="3702"/>
    <lineage>
        <taxon>Eukaryota</taxon>
        <taxon>Viridiplantae</taxon>
        <taxon>Streptophyta</taxon>
        <taxon>Embryophyta</taxon>
        <taxon>Tracheophyta</taxon>
        <taxon>Spermatophyta</taxon>
        <taxon>Magnoliopsida</taxon>
        <taxon>eudicotyledons</taxon>
        <taxon>Gunneridae</taxon>
        <taxon>Pentapetalae</taxon>
        <taxon>rosids</taxon>
        <taxon>malvids</taxon>
        <taxon>Brassicales</taxon>
        <taxon>Brassicaceae</taxon>
        <taxon>Camelineae</taxon>
        <taxon>Arabidopsis</taxon>
    </lineage>
</organism>
<feature type="chain" id="PRO_0000283232" description="Putative F-box/kelch-repeat protein At3g43710">
    <location>
        <begin position="1"/>
        <end position="378"/>
    </location>
</feature>
<feature type="domain" description="F-box" evidence="1">
    <location>
        <begin position="23"/>
        <end position="69"/>
    </location>
</feature>
<feature type="repeat" description="Kelch 1">
    <location>
        <begin position="130"/>
        <end position="176"/>
    </location>
</feature>
<feature type="repeat" description="Kelch 2">
    <location>
        <begin position="178"/>
        <end position="227"/>
    </location>
</feature>
<feature type="repeat" description="Kelch 3">
    <location>
        <begin position="262"/>
        <end position="308"/>
    </location>
</feature>
<gene>
    <name type="ordered locus">At3g43710</name>
    <name type="ORF">F23N14.90</name>
</gene>
<evidence type="ECO:0000255" key="1">
    <source>
        <dbReference type="PROSITE-ProRule" id="PRU00080"/>
    </source>
</evidence>
<name>FBK72_ARATH</name>
<keyword id="KW-0880">Kelch repeat</keyword>
<keyword id="KW-1185">Reference proteome</keyword>
<keyword id="KW-0677">Repeat</keyword>
<sequence length="378" mass="43408">METTPKRSKTLLMSNGEERRSMTFGIEMLPDDLVLSCLARVPRMYYPILSLVSKRFRSFLTSTELYQTRNLLGSTESFLFVCLRIVNDSNPLRLFTLCRRPNSLTKVMVPILSPDSIPKFLPDVVLVGSNIYVIGGLINNNASHKVMVMDCRSHTWREAQGTCVARVSPSACVLDGKIYVAGGCKNLDATMWMEVFDTKTESWEFVSSPGEEICRDLTSCESIGYDGNVYVESMKTYGLYELHKGRWREGQYSMSRGGSLSSQCVIDNVLYRSWSYMVEWYDSENKLWNSLKGLEKLFIVTNQYVPTKCVNYGGKLAVFWLEKVYAKHLHQETKIWCAVITIERRKKEEIWGTREWFDLVFTTNEEMVDLTHVFAATL</sequence>
<proteinExistence type="predicted"/>
<protein>
    <recommendedName>
        <fullName>Putative F-box/kelch-repeat protein At3g43710</fullName>
    </recommendedName>
</protein>
<accession>Q9M2B5</accession>
<reference key="1">
    <citation type="journal article" date="2000" name="Nature">
        <title>Sequence and analysis of chromosome 3 of the plant Arabidopsis thaliana.</title>
        <authorList>
            <person name="Salanoubat M."/>
            <person name="Lemcke K."/>
            <person name="Rieger M."/>
            <person name="Ansorge W."/>
            <person name="Unseld M."/>
            <person name="Fartmann B."/>
            <person name="Valle G."/>
            <person name="Bloecker H."/>
            <person name="Perez-Alonso M."/>
            <person name="Obermaier B."/>
            <person name="Delseny M."/>
            <person name="Boutry M."/>
            <person name="Grivell L.A."/>
            <person name="Mache R."/>
            <person name="Puigdomenech P."/>
            <person name="De Simone V."/>
            <person name="Choisne N."/>
            <person name="Artiguenave F."/>
            <person name="Robert C."/>
            <person name="Brottier P."/>
            <person name="Wincker P."/>
            <person name="Cattolico L."/>
            <person name="Weissenbach J."/>
            <person name="Saurin W."/>
            <person name="Quetier F."/>
            <person name="Schaefer M."/>
            <person name="Mueller-Auer S."/>
            <person name="Gabel C."/>
            <person name="Fuchs M."/>
            <person name="Benes V."/>
            <person name="Wurmbach E."/>
            <person name="Drzonek H."/>
            <person name="Erfle H."/>
            <person name="Jordan N."/>
            <person name="Bangert S."/>
            <person name="Wiedelmann R."/>
            <person name="Kranz H."/>
            <person name="Voss H."/>
            <person name="Holland R."/>
            <person name="Brandt P."/>
            <person name="Nyakatura G."/>
            <person name="Vezzi A."/>
            <person name="D'Angelo M."/>
            <person name="Pallavicini A."/>
            <person name="Toppo S."/>
            <person name="Simionati B."/>
            <person name="Conrad A."/>
            <person name="Hornischer K."/>
            <person name="Kauer G."/>
            <person name="Loehnert T.-H."/>
            <person name="Nordsiek G."/>
            <person name="Reichelt J."/>
            <person name="Scharfe M."/>
            <person name="Schoen O."/>
            <person name="Bargues M."/>
            <person name="Terol J."/>
            <person name="Climent J."/>
            <person name="Navarro P."/>
            <person name="Collado C."/>
            <person name="Perez-Perez A."/>
            <person name="Ottenwaelder B."/>
            <person name="Duchemin D."/>
            <person name="Cooke R."/>
            <person name="Laudie M."/>
            <person name="Berger-Llauro C."/>
            <person name="Purnelle B."/>
            <person name="Masuy D."/>
            <person name="de Haan M."/>
            <person name="Maarse A.C."/>
            <person name="Alcaraz J.-P."/>
            <person name="Cottet A."/>
            <person name="Casacuberta E."/>
            <person name="Monfort A."/>
            <person name="Argiriou A."/>
            <person name="Flores M."/>
            <person name="Liguori R."/>
            <person name="Vitale D."/>
            <person name="Mannhaupt G."/>
            <person name="Haase D."/>
            <person name="Schoof H."/>
            <person name="Rudd S."/>
            <person name="Zaccaria P."/>
            <person name="Mewes H.-W."/>
            <person name="Mayer K.F.X."/>
            <person name="Kaul S."/>
            <person name="Town C.D."/>
            <person name="Koo H.L."/>
            <person name="Tallon L.J."/>
            <person name="Jenkins J."/>
            <person name="Rooney T."/>
            <person name="Rizzo M."/>
            <person name="Walts A."/>
            <person name="Utterback T."/>
            <person name="Fujii C.Y."/>
            <person name="Shea T.P."/>
            <person name="Creasy T.H."/>
            <person name="Haas B."/>
            <person name="Maiti R."/>
            <person name="Wu D."/>
            <person name="Peterson J."/>
            <person name="Van Aken S."/>
            <person name="Pai G."/>
            <person name="Militscher J."/>
            <person name="Sellers P."/>
            <person name="Gill J.E."/>
            <person name="Feldblyum T.V."/>
            <person name="Preuss D."/>
            <person name="Lin X."/>
            <person name="Nierman W.C."/>
            <person name="Salzberg S.L."/>
            <person name="White O."/>
            <person name="Venter J.C."/>
            <person name="Fraser C.M."/>
            <person name="Kaneko T."/>
            <person name="Nakamura Y."/>
            <person name="Sato S."/>
            <person name="Kato T."/>
            <person name="Asamizu E."/>
            <person name="Sasamoto S."/>
            <person name="Kimura T."/>
            <person name="Idesawa K."/>
            <person name="Kawashima K."/>
            <person name="Kishida Y."/>
            <person name="Kiyokawa C."/>
            <person name="Kohara M."/>
            <person name="Matsumoto M."/>
            <person name="Matsuno A."/>
            <person name="Muraki A."/>
            <person name="Nakayama S."/>
            <person name="Nakazaki N."/>
            <person name="Shinpo S."/>
            <person name="Takeuchi C."/>
            <person name="Wada T."/>
            <person name="Watanabe A."/>
            <person name="Yamada M."/>
            <person name="Yasuda M."/>
            <person name="Tabata S."/>
        </authorList>
    </citation>
    <scope>NUCLEOTIDE SEQUENCE [LARGE SCALE GENOMIC DNA]</scope>
    <source>
        <strain>cv. Columbia</strain>
    </source>
</reference>
<reference key="2">
    <citation type="journal article" date="2017" name="Plant J.">
        <title>Araport11: a complete reannotation of the Arabidopsis thaliana reference genome.</title>
        <authorList>
            <person name="Cheng C.Y."/>
            <person name="Krishnakumar V."/>
            <person name="Chan A.P."/>
            <person name="Thibaud-Nissen F."/>
            <person name="Schobel S."/>
            <person name="Town C.D."/>
        </authorList>
    </citation>
    <scope>GENOME REANNOTATION</scope>
    <source>
        <strain>cv. Columbia</strain>
    </source>
</reference>
<dbReference type="EMBL" id="AL138638">
    <property type="protein sequence ID" value="CAB83072.1"/>
    <property type="molecule type" value="Genomic_DNA"/>
</dbReference>
<dbReference type="EMBL" id="CP002686">
    <property type="protein sequence ID" value="AEE77820.1"/>
    <property type="molecule type" value="Genomic_DNA"/>
</dbReference>
<dbReference type="PIR" id="T47407">
    <property type="entry name" value="T47407"/>
</dbReference>
<dbReference type="RefSeq" id="NP_189957.1">
    <property type="nucleotide sequence ID" value="NM_114239.1"/>
</dbReference>
<dbReference type="SMR" id="Q9M2B5"/>
<dbReference type="PaxDb" id="3702-AT3G43710.1"/>
<dbReference type="EnsemblPlants" id="AT3G43710.1">
    <property type="protein sequence ID" value="AT3G43710.1"/>
    <property type="gene ID" value="AT3G43710"/>
</dbReference>
<dbReference type="GeneID" id="823479"/>
<dbReference type="Gramene" id="AT3G43710.1">
    <property type="protein sequence ID" value="AT3G43710.1"/>
    <property type="gene ID" value="AT3G43710"/>
</dbReference>
<dbReference type="KEGG" id="ath:AT3G43710"/>
<dbReference type="Araport" id="AT3G43710"/>
<dbReference type="TAIR" id="AT3G43710"/>
<dbReference type="eggNOG" id="KOG1072">
    <property type="taxonomic scope" value="Eukaryota"/>
</dbReference>
<dbReference type="HOGENOM" id="CLU_032521_1_2_1"/>
<dbReference type="InParanoid" id="Q9M2B5"/>
<dbReference type="OMA" id="SCMIDWY"/>
<dbReference type="PhylomeDB" id="Q9M2B5"/>
<dbReference type="PRO" id="PR:Q9M2B5"/>
<dbReference type="Proteomes" id="UP000006548">
    <property type="component" value="Chromosome 3"/>
</dbReference>
<dbReference type="ExpressionAtlas" id="Q9M2B5">
    <property type="expression patterns" value="baseline"/>
</dbReference>
<dbReference type="CDD" id="cd22152">
    <property type="entry name" value="F-box_AtAFR-like"/>
    <property type="match status" value="1"/>
</dbReference>
<dbReference type="Gene3D" id="2.120.10.80">
    <property type="entry name" value="Kelch-type beta propeller"/>
    <property type="match status" value="1"/>
</dbReference>
<dbReference type="InterPro" id="IPR036047">
    <property type="entry name" value="F-box-like_dom_sf"/>
</dbReference>
<dbReference type="InterPro" id="IPR050354">
    <property type="entry name" value="F-box/kelch-repeat_ARATH"/>
</dbReference>
<dbReference type="InterPro" id="IPR001810">
    <property type="entry name" value="F-box_dom"/>
</dbReference>
<dbReference type="InterPro" id="IPR015915">
    <property type="entry name" value="Kelch-typ_b-propeller"/>
</dbReference>
<dbReference type="InterPro" id="IPR006652">
    <property type="entry name" value="Kelch_1"/>
</dbReference>
<dbReference type="PANTHER" id="PTHR24414:SF202">
    <property type="entry name" value="F-BOX DOMAIN-CONTAINING PROTEIN"/>
    <property type="match status" value="1"/>
</dbReference>
<dbReference type="PANTHER" id="PTHR24414">
    <property type="entry name" value="F-BOX/KELCH-REPEAT PROTEIN SKIP4"/>
    <property type="match status" value="1"/>
</dbReference>
<dbReference type="Pfam" id="PF00646">
    <property type="entry name" value="F-box"/>
    <property type="match status" value="1"/>
</dbReference>
<dbReference type="Pfam" id="PF25210">
    <property type="entry name" value="Kelch_FKB95"/>
    <property type="match status" value="1"/>
</dbReference>
<dbReference type="SMART" id="SM00256">
    <property type="entry name" value="FBOX"/>
    <property type="match status" value="1"/>
</dbReference>
<dbReference type="SMART" id="SM00612">
    <property type="entry name" value="Kelch"/>
    <property type="match status" value="2"/>
</dbReference>
<dbReference type="SUPFAM" id="SSF81383">
    <property type="entry name" value="F-box domain"/>
    <property type="match status" value="1"/>
</dbReference>
<dbReference type="SUPFAM" id="SSF117281">
    <property type="entry name" value="Kelch motif"/>
    <property type="match status" value="1"/>
</dbReference>
<dbReference type="PROSITE" id="PS50181">
    <property type="entry name" value="FBOX"/>
    <property type="match status" value="1"/>
</dbReference>